<name>RLME_YERPS</name>
<gene>
    <name evidence="1" type="primary">rlmE</name>
    <name evidence="1" type="synonym">ftsJ</name>
    <name evidence="1" type="synonym">rrmJ</name>
    <name type="ordered locus">YPTB0473</name>
</gene>
<evidence type="ECO:0000255" key="1">
    <source>
        <dbReference type="HAMAP-Rule" id="MF_01547"/>
    </source>
</evidence>
<feature type="chain" id="PRO_0000155561" description="Ribosomal RNA large subunit methyltransferase E">
    <location>
        <begin position="1"/>
        <end position="209"/>
    </location>
</feature>
<feature type="active site" description="Proton acceptor" evidence="1">
    <location>
        <position position="164"/>
    </location>
</feature>
<feature type="binding site" evidence="1">
    <location>
        <position position="63"/>
    </location>
    <ligand>
        <name>S-adenosyl-L-methionine</name>
        <dbReference type="ChEBI" id="CHEBI:59789"/>
    </ligand>
</feature>
<feature type="binding site" evidence="1">
    <location>
        <position position="65"/>
    </location>
    <ligand>
        <name>S-adenosyl-L-methionine</name>
        <dbReference type="ChEBI" id="CHEBI:59789"/>
    </ligand>
</feature>
<feature type="binding site" evidence="1">
    <location>
        <position position="83"/>
    </location>
    <ligand>
        <name>S-adenosyl-L-methionine</name>
        <dbReference type="ChEBI" id="CHEBI:59789"/>
    </ligand>
</feature>
<feature type="binding site" evidence="1">
    <location>
        <position position="99"/>
    </location>
    <ligand>
        <name>S-adenosyl-L-methionine</name>
        <dbReference type="ChEBI" id="CHEBI:59789"/>
    </ligand>
</feature>
<feature type="binding site" evidence="1">
    <location>
        <position position="124"/>
    </location>
    <ligand>
        <name>S-adenosyl-L-methionine</name>
        <dbReference type="ChEBI" id="CHEBI:59789"/>
    </ligand>
</feature>
<reference key="1">
    <citation type="journal article" date="2004" name="Proc. Natl. Acad. Sci. U.S.A.">
        <title>Insights into the evolution of Yersinia pestis through whole-genome comparison with Yersinia pseudotuberculosis.</title>
        <authorList>
            <person name="Chain P.S.G."/>
            <person name="Carniel E."/>
            <person name="Larimer F.W."/>
            <person name="Lamerdin J."/>
            <person name="Stoutland P.O."/>
            <person name="Regala W.M."/>
            <person name="Georgescu A.M."/>
            <person name="Vergez L.M."/>
            <person name="Land M.L."/>
            <person name="Motin V.L."/>
            <person name="Brubaker R.R."/>
            <person name="Fowler J."/>
            <person name="Hinnebusch J."/>
            <person name="Marceau M."/>
            <person name="Medigue C."/>
            <person name="Simonet M."/>
            <person name="Chenal-Francisque V."/>
            <person name="Souza B."/>
            <person name="Dacheux D."/>
            <person name="Elliott J.M."/>
            <person name="Derbise A."/>
            <person name="Hauser L.J."/>
            <person name="Garcia E."/>
        </authorList>
    </citation>
    <scope>NUCLEOTIDE SEQUENCE [LARGE SCALE GENOMIC DNA]</scope>
    <source>
        <strain>IP32953</strain>
    </source>
</reference>
<proteinExistence type="inferred from homology"/>
<sequence length="209" mass="23409">MSNKKRSASSSRWLQEHFSDKYVIQAQKKGLRSRAWFKLDEIQQSDKLFKQGMTVVDLGAAPGGWSQYAVTQIGSKGRVIACDLLPMDPIVGVDFLQGDFRDELVLKALLERVGDKKVQVVMCDMAPNMSGTPAVDIPKSMYLVELALDMCRDVLAPGGSFLVKVFQGDGFDEYLREIRSLFTKVKIRKPDASRARSREVYIVATGRKL</sequence>
<comment type="function">
    <text evidence="1">Specifically methylates the uridine in position 2552 of 23S rRNA at the 2'-O position of the ribose in the fully assembled 50S ribosomal subunit.</text>
</comment>
<comment type="catalytic activity">
    <reaction evidence="1">
        <text>uridine(2552) in 23S rRNA + S-adenosyl-L-methionine = 2'-O-methyluridine(2552) in 23S rRNA + S-adenosyl-L-homocysteine + H(+)</text>
        <dbReference type="Rhea" id="RHEA:42720"/>
        <dbReference type="Rhea" id="RHEA-COMP:10202"/>
        <dbReference type="Rhea" id="RHEA-COMP:10203"/>
        <dbReference type="ChEBI" id="CHEBI:15378"/>
        <dbReference type="ChEBI" id="CHEBI:57856"/>
        <dbReference type="ChEBI" id="CHEBI:59789"/>
        <dbReference type="ChEBI" id="CHEBI:65315"/>
        <dbReference type="ChEBI" id="CHEBI:74478"/>
        <dbReference type="EC" id="2.1.1.166"/>
    </reaction>
</comment>
<comment type="subcellular location">
    <subcellularLocation>
        <location evidence="1">Cytoplasm</location>
    </subcellularLocation>
</comment>
<comment type="similarity">
    <text evidence="1">Belongs to the class I-like SAM-binding methyltransferase superfamily. RNA methyltransferase RlmE family.</text>
</comment>
<keyword id="KW-0963">Cytoplasm</keyword>
<keyword id="KW-0489">Methyltransferase</keyword>
<keyword id="KW-0698">rRNA processing</keyword>
<keyword id="KW-0949">S-adenosyl-L-methionine</keyword>
<keyword id="KW-0808">Transferase</keyword>
<organism>
    <name type="scientific">Yersinia pseudotuberculosis serotype I (strain IP32953)</name>
    <dbReference type="NCBI Taxonomy" id="273123"/>
    <lineage>
        <taxon>Bacteria</taxon>
        <taxon>Pseudomonadati</taxon>
        <taxon>Pseudomonadota</taxon>
        <taxon>Gammaproteobacteria</taxon>
        <taxon>Enterobacterales</taxon>
        <taxon>Yersiniaceae</taxon>
        <taxon>Yersinia</taxon>
    </lineage>
</organism>
<protein>
    <recommendedName>
        <fullName evidence="1">Ribosomal RNA large subunit methyltransferase E</fullName>
        <ecNumber evidence="1">2.1.1.166</ecNumber>
    </recommendedName>
    <alternativeName>
        <fullName evidence="1">23S rRNA Um2552 methyltransferase</fullName>
    </alternativeName>
    <alternativeName>
        <fullName evidence="1">rRNA (uridine-2'-O-)-methyltransferase</fullName>
    </alternativeName>
</protein>
<dbReference type="EC" id="2.1.1.166" evidence="1"/>
<dbReference type="EMBL" id="BX936398">
    <property type="protein sequence ID" value="CAH19713.1"/>
    <property type="molecule type" value="Genomic_DNA"/>
</dbReference>
<dbReference type="RefSeq" id="WP_002228196.1">
    <property type="nucleotide sequence ID" value="NZ_CP009712.1"/>
</dbReference>
<dbReference type="SMR" id="Q66F67"/>
<dbReference type="GeneID" id="57975211"/>
<dbReference type="KEGG" id="ypo:BZ17_2092"/>
<dbReference type="KEGG" id="yps:YPTB0473"/>
<dbReference type="PATRIC" id="fig|273123.14.peg.2218"/>
<dbReference type="Proteomes" id="UP000001011">
    <property type="component" value="Chromosome"/>
</dbReference>
<dbReference type="GO" id="GO:0005737">
    <property type="term" value="C:cytoplasm"/>
    <property type="evidence" value="ECO:0007669"/>
    <property type="project" value="UniProtKB-SubCell"/>
</dbReference>
<dbReference type="GO" id="GO:0008650">
    <property type="term" value="F:rRNA (uridine-2'-O-)-methyltransferase activity"/>
    <property type="evidence" value="ECO:0007669"/>
    <property type="project" value="UniProtKB-UniRule"/>
</dbReference>
<dbReference type="FunFam" id="3.40.50.150:FF:000005">
    <property type="entry name" value="Ribosomal RNA large subunit methyltransferase E"/>
    <property type="match status" value="1"/>
</dbReference>
<dbReference type="Gene3D" id="3.40.50.150">
    <property type="entry name" value="Vaccinia Virus protein VP39"/>
    <property type="match status" value="1"/>
</dbReference>
<dbReference type="HAMAP" id="MF_01547">
    <property type="entry name" value="RNA_methyltr_E"/>
    <property type="match status" value="1"/>
</dbReference>
<dbReference type="InterPro" id="IPR050082">
    <property type="entry name" value="RNA_methyltr_RlmE"/>
</dbReference>
<dbReference type="InterPro" id="IPR002877">
    <property type="entry name" value="RNA_MeTrfase_FtsJ_dom"/>
</dbReference>
<dbReference type="InterPro" id="IPR015507">
    <property type="entry name" value="rRNA-MeTfrase_E"/>
</dbReference>
<dbReference type="InterPro" id="IPR004512">
    <property type="entry name" value="rRNA_MeTrfase_gammaproteobac"/>
</dbReference>
<dbReference type="InterPro" id="IPR029063">
    <property type="entry name" value="SAM-dependent_MTases_sf"/>
</dbReference>
<dbReference type="NCBIfam" id="NF008390">
    <property type="entry name" value="PRK11188.1"/>
    <property type="match status" value="1"/>
</dbReference>
<dbReference type="NCBIfam" id="TIGR00438">
    <property type="entry name" value="rrmJ"/>
    <property type="match status" value="1"/>
</dbReference>
<dbReference type="PANTHER" id="PTHR10920">
    <property type="entry name" value="RIBOSOMAL RNA METHYLTRANSFERASE"/>
    <property type="match status" value="1"/>
</dbReference>
<dbReference type="PANTHER" id="PTHR10920:SF18">
    <property type="entry name" value="RRNA METHYLTRANSFERASE 2, MITOCHONDRIAL"/>
    <property type="match status" value="1"/>
</dbReference>
<dbReference type="Pfam" id="PF01728">
    <property type="entry name" value="FtsJ"/>
    <property type="match status" value="1"/>
</dbReference>
<dbReference type="PIRSF" id="PIRSF005461">
    <property type="entry name" value="23S_rRNA_mtase"/>
    <property type="match status" value="1"/>
</dbReference>
<dbReference type="SUPFAM" id="SSF53335">
    <property type="entry name" value="S-adenosyl-L-methionine-dependent methyltransferases"/>
    <property type="match status" value="1"/>
</dbReference>
<accession>Q66F67</accession>